<accession>Q9RAM6</accession>
<accession>Q1H4F5</accession>
<gene>
    <name type="primary">thrB</name>
    <name type="ordered locus">Mfla_0361</name>
</gene>
<reference key="1">
    <citation type="journal article" date="1999" name="Microbiology">
        <title>Organization of threonine biosynthesis genes from the obligate methylotroph Methylobacillus flagellatus.</title>
        <authorList>
            <person name="Marchenko G.N."/>
            <person name="Marchenko N.D."/>
            <person name="Tsygankov Y.D."/>
            <person name="Chistoserdov A.Y."/>
        </authorList>
    </citation>
    <scope>NUCLEOTIDE SEQUENCE [GENOMIC DNA]</scope>
</reference>
<reference key="2">
    <citation type="submission" date="2006-03" db="EMBL/GenBank/DDBJ databases">
        <title>Complete sequence of Methylobacillus flagellatus KT.</title>
        <authorList>
            <consortium name="US DOE Joint Genome Institute"/>
            <person name="Copeland A."/>
            <person name="Lucas S."/>
            <person name="Lapidus A."/>
            <person name="Barry K."/>
            <person name="Detter J.C."/>
            <person name="Glavina del Rio T."/>
            <person name="Hammon N."/>
            <person name="Israni S."/>
            <person name="Dalin E."/>
            <person name="Tice H."/>
            <person name="Pitluck S."/>
            <person name="Brettin T."/>
            <person name="Bruce D."/>
            <person name="Han C."/>
            <person name="Tapia R."/>
            <person name="Saunders E."/>
            <person name="Gilna P."/>
            <person name="Schmutz J."/>
            <person name="Larimer F."/>
            <person name="Land M."/>
            <person name="Kyrpides N."/>
            <person name="Anderson I."/>
            <person name="Richardson P."/>
        </authorList>
    </citation>
    <scope>NUCLEOTIDE SEQUENCE [LARGE SCALE GENOMIC DNA]</scope>
    <source>
        <strain>ATCC 51484 / DSM 6875 / VKM B-1610 / KT</strain>
    </source>
</reference>
<sequence>MSVFTTVSFEQMQQWLKGYDLGELLDLQGIASGITNTNYFVTTDNGRYVLTLFEEHSAEELPNFLDLMTHLAERGIPCPHPVKNNAGRALGELNGKPAALVSCLAGRSLDNPMPQHCAAIGEVLARMHIAGASFKAGMSNLRGQEWRIATAAKVAPFLDEENHRMLDAQLEFERTFDTRRLPRGVIHADLFRDNVLMDGDKVGGVIDFYYACHDALLYDIAIAVNDWCVNADCTLDAVRVRAFLDAYHAIRPLTGEEHAAWPGMLRVAAMRFWLSRLNDLYFPQAGELTHAKDPAYFERILKHSIAAREQILAVWVNAH</sequence>
<organism>
    <name type="scientific">Methylobacillus flagellatus (strain ATCC 51484 / DSM 6875 / VKM B-1610 / KT)</name>
    <dbReference type="NCBI Taxonomy" id="265072"/>
    <lineage>
        <taxon>Bacteria</taxon>
        <taxon>Pseudomonadati</taxon>
        <taxon>Pseudomonadota</taxon>
        <taxon>Betaproteobacteria</taxon>
        <taxon>Nitrosomonadales</taxon>
        <taxon>Methylophilaceae</taxon>
        <taxon>Methylobacillus</taxon>
    </lineage>
</organism>
<evidence type="ECO:0000305" key="1"/>
<comment type="catalytic activity">
    <reaction>
        <text>L-homoserine + ATP = O-phospho-L-homoserine + ADP + H(+)</text>
        <dbReference type="Rhea" id="RHEA:13985"/>
        <dbReference type="ChEBI" id="CHEBI:15378"/>
        <dbReference type="ChEBI" id="CHEBI:30616"/>
        <dbReference type="ChEBI" id="CHEBI:57476"/>
        <dbReference type="ChEBI" id="CHEBI:57590"/>
        <dbReference type="ChEBI" id="CHEBI:456216"/>
        <dbReference type="EC" id="2.7.1.39"/>
    </reaction>
</comment>
<comment type="pathway">
    <text>Amino-acid biosynthesis; L-threonine biosynthesis; L-threonine from L-aspartate: step 4/5.</text>
</comment>
<comment type="similarity">
    <text evidence="1">Belongs to the pseudomonas-type ThrB family.</text>
</comment>
<protein>
    <recommendedName>
        <fullName>Homoserine kinase</fullName>
        <shortName>HK</shortName>
        <shortName>HSK</shortName>
        <ecNumber>2.7.1.39</ecNumber>
    </recommendedName>
</protein>
<keyword id="KW-0028">Amino-acid biosynthesis</keyword>
<keyword id="KW-0067">ATP-binding</keyword>
<keyword id="KW-0418">Kinase</keyword>
<keyword id="KW-0547">Nucleotide-binding</keyword>
<keyword id="KW-1185">Reference proteome</keyword>
<keyword id="KW-0791">Threonine biosynthesis</keyword>
<keyword id="KW-0808">Transferase</keyword>
<dbReference type="EC" id="2.7.1.39"/>
<dbReference type="EMBL" id="L78666">
    <property type="protein sequence ID" value="AAF21132.1"/>
    <property type="molecule type" value="Genomic_DNA"/>
</dbReference>
<dbReference type="EMBL" id="CP000284">
    <property type="protein sequence ID" value="ABE48632.1"/>
    <property type="molecule type" value="Genomic_DNA"/>
</dbReference>
<dbReference type="RefSeq" id="WP_011478729.1">
    <property type="nucleotide sequence ID" value="NC_007947.1"/>
</dbReference>
<dbReference type="SMR" id="Q9RAM6"/>
<dbReference type="STRING" id="265072.Mfla_0361"/>
<dbReference type="KEGG" id="mfa:Mfla_0361"/>
<dbReference type="eggNOG" id="COG2334">
    <property type="taxonomic scope" value="Bacteria"/>
</dbReference>
<dbReference type="HOGENOM" id="CLU_053300_0_0_4"/>
<dbReference type="OrthoDB" id="9777460at2"/>
<dbReference type="UniPathway" id="UPA00050">
    <property type="reaction ID" value="UER00064"/>
</dbReference>
<dbReference type="Proteomes" id="UP000002440">
    <property type="component" value="Chromosome"/>
</dbReference>
<dbReference type="GO" id="GO:0005524">
    <property type="term" value="F:ATP binding"/>
    <property type="evidence" value="ECO:0007669"/>
    <property type="project" value="UniProtKB-KW"/>
</dbReference>
<dbReference type="GO" id="GO:0004413">
    <property type="term" value="F:homoserine kinase activity"/>
    <property type="evidence" value="ECO:0007669"/>
    <property type="project" value="UniProtKB-UniRule"/>
</dbReference>
<dbReference type="GO" id="GO:0009088">
    <property type="term" value="P:threonine biosynthetic process"/>
    <property type="evidence" value="ECO:0007669"/>
    <property type="project" value="UniProtKB-UniRule"/>
</dbReference>
<dbReference type="CDD" id="cd05153">
    <property type="entry name" value="HomoserineK_II"/>
    <property type="match status" value="1"/>
</dbReference>
<dbReference type="Gene3D" id="3.90.1200.10">
    <property type="match status" value="1"/>
</dbReference>
<dbReference type="Gene3D" id="3.30.200.20">
    <property type="entry name" value="Phosphorylase Kinase, domain 1"/>
    <property type="match status" value="1"/>
</dbReference>
<dbReference type="HAMAP" id="MF_00301">
    <property type="entry name" value="Homoser_kinase_2"/>
    <property type="match status" value="1"/>
</dbReference>
<dbReference type="InterPro" id="IPR002575">
    <property type="entry name" value="Aminoglycoside_PTrfase"/>
</dbReference>
<dbReference type="InterPro" id="IPR005280">
    <property type="entry name" value="Homoserine_kinase_II"/>
</dbReference>
<dbReference type="InterPro" id="IPR011009">
    <property type="entry name" value="Kinase-like_dom_sf"/>
</dbReference>
<dbReference type="InterPro" id="IPR050249">
    <property type="entry name" value="Pseudomonas-type_ThrB"/>
</dbReference>
<dbReference type="NCBIfam" id="NF003558">
    <property type="entry name" value="PRK05231.1"/>
    <property type="match status" value="1"/>
</dbReference>
<dbReference type="NCBIfam" id="TIGR00938">
    <property type="entry name" value="thrB_alt"/>
    <property type="match status" value="1"/>
</dbReference>
<dbReference type="PANTHER" id="PTHR21064:SF6">
    <property type="entry name" value="AMINOGLYCOSIDE PHOSPHOTRANSFERASE DOMAIN-CONTAINING PROTEIN"/>
    <property type="match status" value="1"/>
</dbReference>
<dbReference type="PANTHER" id="PTHR21064">
    <property type="entry name" value="AMINOGLYCOSIDE PHOSPHOTRANSFERASE DOMAIN-CONTAINING PROTEIN-RELATED"/>
    <property type="match status" value="1"/>
</dbReference>
<dbReference type="Pfam" id="PF01636">
    <property type="entry name" value="APH"/>
    <property type="match status" value="1"/>
</dbReference>
<dbReference type="SUPFAM" id="SSF56112">
    <property type="entry name" value="Protein kinase-like (PK-like)"/>
    <property type="match status" value="1"/>
</dbReference>
<feature type="chain" id="PRO_0000172190" description="Homoserine kinase">
    <location>
        <begin position="1"/>
        <end position="319"/>
    </location>
</feature>
<feature type="sequence conflict" description="In Ref. 1; AAF21132." evidence="1" ref="1">
    <original>WL</original>
    <variation>CV</variation>
    <location>
        <begin position="273"/>
        <end position="274"/>
    </location>
</feature>
<proteinExistence type="inferred from homology"/>
<name>KHSE_METFK</name>